<organism>
    <name type="scientific">Dictyostelium discoideum</name>
    <name type="common">Social amoeba</name>
    <dbReference type="NCBI Taxonomy" id="44689"/>
    <lineage>
        <taxon>Eukaryota</taxon>
        <taxon>Amoebozoa</taxon>
        <taxon>Evosea</taxon>
        <taxon>Eumycetozoa</taxon>
        <taxon>Dictyostelia</taxon>
        <taxon>Dictyosteliales</taxon>
        <taxon>Dictyosteliaceae</taxon>
        <taxon>Dictyostelium</taxon>
    </lineage>
</organism>
<keyword id="KW-0072">Autophagy</keyword>
<keyword id="KW-0256">Endoplasmic reticulum</keyword>
<keyword id="KW-0967">Endosome</keyword>
<keyword id="KW-0333">Golgi apparatus</keyword>
<keyword id="KW-0342">GTP-binding</keyword>
<keyword id="KW-0449">Lipoprotein</keyword>
<keyword id="KW-0472">Membrane</keyword>
<keyword id="KW-0547">Nucleotide-binding</keyword>
<keyword id="KW-0636">Prenylation</keyword>
<keyword id="KW-0653">Protein transport</keyword>
<keyword id="KW-1185">Reference proteome</keyword>
<keyword id="KW-0813">Transport</keyword>
<name>RAB24_DICDI</name>
<evidence type="ECO:0000250" key="1"/>
<evidence type="ECO:0000305" key="2"/>
<proteinExistence type="inferred from homology"/>
<accession>Q55FU9</accession>
<gene>
    <name type="primary">rab24</name>
    <name type="ORF">DDB_G0268402</name>
</gene>
<protein>
    <recommendedName>
        <fullName>Ras-related protein Rab-24</fullName>
    </recommendedName>
</protein>
<comment type="function">
    <text evidence="1">May be involved in autophagy-related processes.</text>
</comment>
<comment type="subcellular location">
    <subcellularLocation>
        <location evidence="1">Endoplasmic reticulum-Golgi intermediate compartment</location>
    </subcellularLocation>
    <subcellularLocation>
        <location evidence="1">Endosome</location>
    </subcellularLocation>
    <subcellularLocation>
        <location evidence="1">Endoplasmic reticulum</location>
    </subcellularLocation>
    <subcellularLocation>
        <location evidence="1">Golgi apparatus</location>
    </subcellularLocation>
    <subcellularLocation>
        <location evidence="1">Membrane</location>
        <topology evidence="1">Lipid-anchor</topology>
    </subcellularLocation>
</comment>
<comment type="similarity">
    <text evidence="2">Belongs to the small GTPase superfamily. Rab family.</text>
</comment>
<sequence>MTKTKIDLKVVLLGYASVGKTCIVTRYTSGQFGDTHTTIGGAFSSKRVVVGETEVLLGIWDTAGTERYQAVNVSYYRRANAAIVCYDLTNRESWEKVTFWAEELTQNEPEIEIYIVGTKLDLIQQGDIKAVPEEEVKQTARRYKAHIFETSSRTGENVSLLFQTIAEDFCKRTNNGTNPVNSNPSNVVNVNTQTQKKKGGCC</sequence>
<feature type="chain" id="PRO_0000328265" description="Ras-related protein Rab-24">
    <location>
        <begin position="1"/>
        <end position="202"/>
    </location>
</feature>
<feature type="short sequence motif" description="Effector region" evidence="1">
    <location>
        <begin position="35"/>
        <end position="43"/>
    </location>
</feature>
<feature type="binding site" evidence="1">
    <location>
        <begin position="14"/>
        <end position="21"/>
    </location>
    <ligand>
        <name>GTP</name>
        <dbReference type="ChEBI" id="CHEBI:37565"/>
    </ligand>
</feature>
<feature type="binding site" evidence="1">
    <location>
        <begin position="61"/>
        <end position="65"/>
    </location>
    <ligand>
        <name>GTP</name>
        <dbReference type="ChEBI" id="CHEBI:37565"/>
    </ligand>
</feature>
<feature type="binding site" evidence="1">
    <location>
        <begin position="118"/>
        <end position="121"/>
    </location>
    <ligand>
        <name>GTP</name>
        <dbReference type="ChEBI" id="CHEBI:37565"/>
    </ligand>
</feature>
<feature type="lipid moiety-binding region" description="S-geranylgeranyl cysteine" evidence="1">
    <location>
        <position position="201"/>
    </location>
</feature>
<feature type="lipid moiety-binding region" description="S-geranylgeranyl cysteine" evidence="1">
    <location>
        <position position="202"/>
    </location>
</feature>
<dbReference type="EMBL" id="AAFI02000003">
    <property type="protein sequence ID" value="EAL73654.1"/>
    <property type="molecule type" value="Genomic_DNA"/>
</dbReference>
<dbReference type="RefSeq" id="XP_647434.1">
    <property type="nucleotide sequence ID" value="XM_642342.1"/>
</dbReference>
<dbReference type="SMR" id="Q55FU9"/>
<dbReference type="FunCoup" id="Q55FU9">
    <property type="interactions" value="3"/>
</dbReference>
<dbReference type="STRING" id="44689.Q55FU9"/>
<dbReference type="PaxDb" id="44689-DDB0229417"/>
<dbReference type="EnsemblProtists" id="EAL73654">
    <property type="protein sequence ID" value="EAL73654"/>
    <property type="gene ID" value="DDB_G0268402"/>
</dbReference>
<dbReference type="GeneID" id="8616241"/>
<dbReference type="KEGG" id="ddi:DDB_G0268402"/>
<dbReference type="dictyBase" id="DDB_G0268402">
    <property type="gene designation" value="rab24"/>
</dbReference>
<dbReference type="VEuPathDB" id="AmoebaDB:DDB_G0268402"/>
<dbReference type="eggNOG" id="KOG0092">
    <property type="taxonomic scope" value="Eukaryota"/>
</dbReference>
<dbReference type="HOGENOM" id="CLU_041217_10_2_1"/>
<dbReference type="InParanoid" id="Q55FU9"/>
<dbReference type="OMA" id="RFRAGPY"/>
<dbReference type="PhylomeDB" id="Q55FU9"/>
<dbReference type="Reactome" id="R-DDI-6798695">
    <property type="pathway name" value="Neutrophil degranulation"/>
</dbReference>
<dbReference type="Reactome" id="R-DDI-8873719">
    <property type="pathway name" value="RAB geranylgeranylation"/>
</dbReference>
<dbReference type="PRO" id="PR:Q55FU9"/>
<dbReference type="Proteomes" id="UP000002195">
    <property type="component" value="Chromosome 1"/>
</dbReference>
<dbReference type="GO" id="GO:0005776">
    <property type="term" value="C:autophagosome"/>
    <property type="evidence" value="ECO:0000318"/>
    <property type="project" value="GO_Central"/>
</dbReference>
<dbReference type="GO" id="GO:0030139">
    <property type="term" value="C:endocytic vesicle"/>
    <property type="evidence" value="ECO:0000318"/>
    <property type="project" value="GO_Central"/>
</dbReference>
<dbReference type="GO" id="GO:0012505">
    <property type="term" value="C:endomembrane system"/>
    <property type="evidence" value="ECO:0000318"/>
    <property type="project" value="GO_Central"/>
</dbReference>
<dbReference type="GO" id="GO:0005783">
    <property type="term" value="C:endoplasmic reticulum"/>
    <property type="evidence" value="ECO:0007669"/>
    <property type="project" value="UniProtKB-SubCell"/>
</dbReference>
<dbReference type="GO" id="GO:0005793">
    <property type="term" value="C:endoplasmic reticulum-Golgi intermediate compartment"/>
    <property type="evidence" value="ECO:0007669"/>
    <property type="project" value="UniProtKB-SubCell"/>
</dbReference>
<dbReference type="GO" id="GO:0005768">
    <property type="term" value="C:endosome"/>
    <property type="evidence" value="ECO:0000318"/>
    <property type="project" value="GO_Central"/>
</dbReference>
<dbReference type="GO" id="GO:0005794">
    <property type="term" value="C:Golgi apparatus"/>
    <property type="evidence" value="ECO:0007669"/>
    <property type="project" value="UniProtKB-SubCell"/>
</dbReference>
<dbReference type="GO" id="GO:0016020">
    <property type="term" value="C:membrane"/>
    <property type="evidence" value="ECO:0007669"/>
    <property type="project" value="UniProtKB-SubCell"/>
</dbReference>
<dbReference type="GO" id="GO:0005525">
    <property type="term" value="F:GTP binding"/>
    <property type="evidence" value="ECO:0007669"/>
    <property type="project" value="UniProtKB-KW"/>
</dbReference>
<dbReference type="GO" id="GO:0003924">
    <property type="term" value="F:GTPase activity"/>
    <property type="evidence" value="ECO:0000318"/>
    <property type="project" value="GO_Central"/>
</dbReference>
<dbReference type="GO" id="GO:0006914">
    <property type="term" value="P:autophagy"/>
    <property type="evidence" value="ECO:0007669"/>
    <property type="project" value="UniProtKB-KW"/>
</dbReference>
<dbReference type="GO" id="GO:0006886">
    <property type="term" value="P:intracellular protein transport"/>
    <property type="evidence" value="ECO:0000318"/>
    <property type="project" value="GO_Central"/>
</dbReference>
<dbReference type="CDD" id="cd04118">
    <property type="entry name" value="Rab24"/>
    <property type="match status" value="1"/>
</dbReference>
<dbReference type="FunFam" id="3.40.50.300:FF:001204">
    <property type="entry name" value="Small GTP-binding protein, putative"/>
    <property type="match status" value="1"/>
</dbReference>
<dbReference type="Gene3D" id="3.40.50.300">
    <property type="entry name" value="P-loop containing nucleotide triphosphate hydrolases"/>
    <property type="match status" value="1"/>
</dbReference>
<dbReference type="InterPro" id="IPR027417">
    <property type="entry name" value="P-loop_NTPase"/>
</dbReference>
<dbReference type="InterPro" id="IPR041828">
    <property type="entry name" value="Rab24"/>
</dbReference>
<dbReference type="InterPro" id="IPR005225">
    <property type="entry name" value="Small_GTP-bd"/>
</dbReference>
<dbReference type="InterPro" id="IPR001806">
    <property type="entry name" value="Small_GTPase"/>
</dbReference>
<dbReference type="NCBIfam" id="TIGR00231">
    <property type="entry name" value="small_GTP"/>
    <property type="match status" value="1"/>
</dbReference>
<dbReference type="PANTHER" id="PTHR47978">
    <property type="match status" value="1"/>
</dbReference>
<dbReference type="Pfam" id="PF00071">
    <property type="entry name" value="Ras"/>
    <property type="match status" value="1"/>
</dbReference>
<dbReference type="PRINTS" id="PR00449">
    <property type="entry name" value="RASTRNSFRMNG"/>
</dbReference>
<dbReference type="SMART" id="SM00175">
    <property type="entry name" value="RAB"/>
    <property type="match status" value="1"/>
</dbReference>
<dbReference type="SMART" id="SM00173">
    <property type="entry name" value="RAS"/>
    <property type="match status" value="1"/>
</dbReference>
<dbReference type="SMART" id="SM00174">
    <property type="entry name" value="RHO"/>
    <property type="match status" value="1"/>
</dbReference>
<dbReference type="SUPFAM" id="SSF52540">
    <property type="entry name" value="P-loop containing nucleoside triphosphate hydrolases"/>
    <property type="match status" value="1"/>
</dbReference>
<dbReference type="PROSITE" id="PS51419">
    <property type="entry name" value="RAB"/>
    <property type="match status" value="1"/>
</dbReference>
<reference key="1">
    <citation type="journal article" date="2005" name="Nature">
        <title>The genome of the social amoeba Dictyostelium discoideum.</title>
        <authorList>
            <person name="Eichinger L."/>
            <person name="Pachebat J.A."/>
            <person name="Gloeckner G."/>
            <person name="Rajandream M.A."/>
            <person name="Sucgang R."/>
            <person name="Berriman M."/>
            <person name="Song J."/>
            <person name="Olsen R."/>
            <person name="Szafranski K."/>
            <person name="Xu Q."/>
            <person name="Tunggal B."/>
            <person name="Kummerfeld S."/>
            <person name="Madera M."/>
            <person name="Konfortov B.A."/>
            <person name="Rivero F."/>
            <person name="Bankier A.T."/>
            <person name="Lehmann R."/>
            <person name="Hamlin N."/>
            <person name="Davies R."/>
            <person name="Gaudet P."/>
            <person name="Fey P."/>
            <person name="Pilcher K."/>
            <person name="Chen G."/>
            <person name="Saunders D."/>
            <person name="Sodergren E.J."/>
            <person name="Davis P."/>
            <person name="Kerhornou A."/>
            <person name="Nie X."/>
            <person name="Hall N."/>
            <person name="Anjard C."/>
            <person name="Hemphill L."/>
            <person name="Bason N."/>
            <person name="Farbrother P."/>
            <person name="Desany B."/>
            <person name="Just E."/>
            <person name="Morio T."/>
            <person name="Rost R."/>
            <person name="Churcher C.M."/>
            <person name="Cooper J."/>
            <person name="Haydock S."/>
            <person name="van Driessche N."/>
            <person name="Cronin A."/>
            <person name="Goodhead I."/>
            <person name="Muzny D.M."/>
            <person name="Mourier T."/>
            <person name="Pain A."/>
            <person name="Lu M."/>
            <person name="Harper D."/>
            <person name="Lindsay R."/>
            <person name="Hauser H."/>
            <person name="James K.D."/>
            <person name="Quiles M."/>
            <person name="Madan Babu M."/>
            <person name="Saito T."/>
            <person name="Buchrieser C."/>
            <person name="Wardroper A."/>
            <person name="Felder M."/>
            <person name="Thangavelu M."/>
            <person name="Johnson D."/>
            <person name="Knights A."/>
            <person name="Loulseged H."/>
            <person name="Mungall K.L."/>
            <person name="Oliver K."/>
            <person name="Price C."/>
            <person name="Quail M.A."/>
            <person name="Urushihara H."/>
            <person name="Hernandez J."/>
            <person name="Rabbinowitsch E."/>
            <person name="Steffen D."/>
            <person name="Sanders M."/>
            <person name="Ma J."/>
            <person name="Kohara Y."/>
            <person name="Sharp S."/>
            <person name="Simmonds M.N."/>
            <person name="Spiegler S."/>
            <person name="Tivey A."/>
            <person name="Sugano S."/>
            <person name="White B."/>
            <person name="Walker D."/>
            <person name="Woodward J.R."/>
            <person name="Winckler T."/>
            <person name="Tanaka Y."/>
            <person name="Shaulsky G."/>
            <person name="Schleicher M."/>
            <person name="Weinstock G.M."/>
            <person name="Rosenthal A."/>
            <person name="Cox E.C."/>
            <person name="Chisholm R.L."/>
            <person name="Gibbs R.A."/>
            <person name="Loomis W.F."/>
            <person name="Platzer M."/>
            <person name="Kay R.R."/>
            <person name="Williams J.G."/>
            <person name="Dear P.H."/>
            <person name="Noegel A.A."/>
            <person name="Barrell B.G."/>
            <person name="Kuspa A."/>
        </authorList>
    </citation>
    <scope>NUCLEOTIDE SEQUENCE [LARGE SCALE GENOMIC DNA]</scope>
    <source>
        <strain>AX4</strain>
    </source>
</reference>